<reference key="1">
    <citation type="journal article" date="2006" name="J. Bacteriol.">
        <title>Comparative genomic evidence for a close relationship between the dimorphic prosthecate bacteria Hyphomonas neptunium and Caulobacter crescentus.</title>
        <authorList>
            <person name="Badger J.H."/>
            <person name="Hoover T.R."/>
            <person name="Brun Y.V."/>
            <person name="Weiner R.M."/>
            <person name="Laub M.T."/>
            <person name="Alexandre G."/>
            <person name="Mrazek J."/>
            <person name="Ren Q."/>
            <person name="Paulsen I.T."/>
            <person name="Nelson K.E."/>
            <person name="Khouri H.M."/>
            <person name="Radune D."/>
            <person name="Sosa J."/>
            <person name="Dodson R.J."/>
            <person name="Sullivan S.A."/>
            <person name="Rosovitz M.J."/>
            <person name="Madupu R."/>
            <person name="Brinkac L.M."/>
            <person name="Durkin A.S."/>
            <person name="Daugherty S.C."/>
            <person name="Kothari S.P."/>
            <person name="Giglio M.G."/>
            <person name="Zhou L."/>
            <person name="Haft D.H."/>
            <person name="Selengut J.D."/>
            <person name="Davidsen T.M."/>
            <person name="Yang Q."/>
            <person name="Zafar N."/>
            <person name="Ward N.L."/>
        </authorList>
    </citation>
    <scope>NUCLEOTIDE SEQUENCE [LARGE SCALE GENOMIC DNA]</scope>
    <source>
        <strain>ATCC 15444</strain>
    </source>
</reference>
<feature type="chain" id="PRO_0000291677" description="Bifunctional protein HldE">
    <location>
        <begin position="1"/>
        <end position="486"/>
    </location>
</feature>
<feature type="region of interest" description="Ribokinase">
    <location>
        <begin position="1"/>
        <end position="329"/>
    </location>
</feature>
<feature type="region of interest" description="Cytidylyltransferase">
    <location>
        <begin position="355"/>
        <end position="486"/>
    </location>
</feature>
<feature type="active site" evidence="1">
    <location>
        <position position="274"/>
    </location>
</feature>
<feature type="binding site" evidence="1">
    <location>
        <begin position="204"/>
        <end position="207"/>
    </location>
    <ligand>
        <name>ATP</name>
        <dbReference type="ChEBI" id="CHEBI:30616"/>
    </ligand>
</feature>
<protein>
    <recommendedName>
        <fullName evidence="1">Bifunctional protein HldE</fullName>
    </recommendedName>
    <domain>
        <recommendedName>
            <fullName evidence="1">D-beta-D-heptose 7-phosphate kinase</fullName>
            <ecNumber evidence="1">2.7.1.167</ecNumber>
        </recommendedName>
        <alternativeName>
            <fullName evidence="1">D-beta-D-heptose 7-phosphotransferase</fullName>
        </alternativeName>
        <alternativeName>
            <fullName evidence="1">D-glycero-beta-D-manno-heptose-7-phosphate kinase</fullName>
        </alternativeName>
    </domain>
    <domain>
        <recommendedName>
            <fullName evidence="1">D-beta-D-heptose 1-phosphate adenylyltransferase</fullName>
            <ecNumber evidence="1">2.7.7.70</ecNumber>
        </recommendedName>
        <alternativeName>
            <fullName evidence="1">D-glycero-beta-D-manno-heptose 1-phosphate adenylyltransferase</fullName>
        </alternativeName>
    </domain>
</protein>
<gene>
    <name evidence="1" type="primary">hldE</name>
    <name type="synonym">rfaE</name>
    <name type="ordered locus">HNE_1799</name>
</gene>
<proteinExistence type="inferred from homology"/>
<comment type="function">
    <text evidence="1">Catalyzes the phosphorylation of D-glycero-D-manno-heptose 7-phosphate at the C-1 position to selectively form D-glycero-beta-D-manno-heptose-1,7-bisphosphate.</text>
</comment>
<comment type="function">
    <text evidence="1">Catalyzes the ADP transfer from ATP to D-glycero-beta-D-manno-heptose 1-phosphate, yielding ADP-D-glycero-beta-D-manno-heptose.</text>
</comment>
<comment type="catalytic activity">
    <reaction evidence="1">
        <text>D-glycero-beta-D-manno-heptose 7-phosphate + ATP = D-glycero-beta-D-manno-heptose 1,7-bisphosphate + ADP + H(+)</text>
        <dbReference type="Rhea" id="RHEA:27473"/>
        <dbReference type="ChEBI" id="CHEBI:15378"/>
        <dbReference type="ChEBI" id="CHEBI:30616"/>
        <dbReference type="ChEBI" id="CHEBI:60204"/>
        <dbReference type="ChEBI" id="CHEBI:60208"/>
        <dbReference type="ChEBI" id="CHEBI:456216"/>
        <dbReference type="EC" id="2.7.1.167"/>
    </reaction>
</comment>
<comment type="catalytic activity">
    <reaction evidence="1">
        <text>D-glycero-beta-D-manno-heptose 1-phosphate + ATP + H(+) = ADP-D-glycero-beta-D-manno-heptose + diphosphate</text>
        <dbReference type="Rhea" id="RHEA:27465"/>
        <dbReference type="ChEBI" id="CHEBI:15378"/>
        <dbReference type="ChEBI" id="CHEBI:30616"/>
        <dbReference type="ChEBI" id="CHEBI:33019"/>
        <dbReference type="ChEBI" id="CHEBI:59967"/>
        <dbReference type="ChEBI" id="CHEBI:61593"/>
        <dbReference type="EC" id="2.7.7.70"/>
    </reaction>
</comment>
<comment type="pathway">
    <text evidence="1">Nucleotide-sugar biosynthesis; ADP-L-glycero-beta-D-manno-heptose biosynthesis; ADP-L-glycero-beta-D-manno-heptose from D-glycero-beta-D-manno-heptose 7-phosphate: step 1/4.</text>
</comment>
<comment type="pathway">
    <text evidence="1">Nucleotide-sugar biosynthesis; ADP-L-glycero-beta-D-manno-heptose biosynthesis; ADP-L-glycero-beta-D-manno-heptose from D-glycero-beta-D-manno-heptose 7-phosphate: step 3/4.</text>
</comment>
<comment type="subunit">
    <text evidence="1">Homodimer.</text>
</comment>
<comment type="similarity">
    <text evidence="1">In the N-terminal section; belongs to the carbohydrate kinase PfkB family.</text>
</comment>
<comment type="similarity">
    <text evidence="1">In the C-terminal section; belongs to the cytidylyltransferase family.</text>
</comment>
<accession>Q0C190</accession>
<organism>
    <name type="scientific">Hyphomonas neptunium (strain ATCC 15444)</name>
    <dbReference type="NCBI Taxonomy" id="228405"/>
    <lineage>
        <taxon>Bacteria</taxon>
        <taxon>Pseudomonadati</taxon>
        <taxon>Pseudomonadota</taxon>
        <taxon>Alphaproteobacteria</taxon>
        <taxon>Hyphomonadales</taxon>
        <taxon>Hyphomonadaceae</taxon>
        <taxon>Hyphomonas</taxon>
    </lineage>
</organism>
<sequence>MSSRLSGLLDRAAGKRVLCIGDVMLDRFIYGVVDRISPEAPVPVLRHSREASMPGGAANVARNLASLGLEPVLIGACGDDDAGRELLSIFDQDLSLSVRLVTAKGRPTTLKCRFVAGGHQLLRVDTENVAPVSEATEEELIGILSREAPGSAAILISDYAKGLLTDRLLKAVTKLAADLNIPLIADPKGRDFARYGAVDILKPNAFELSAAVHRSISTDEEAALALREALDTLPAKAIIVTRAARGISYIGQDGNVHHEAGRAREVFDVSGAGDTSLAALATAIAGGGTLSDAVHLAIAASGIAVGKAGTATVSAEEIKAALSVAGPVGRAGLLPMDAMIGQVERWRAAGLKIGFTNGCFDILHPGHIRVIEQARAHCDRLVVGLNSDNSVKRLKGPLRPINNEQARADVLSALSAVDGVIIFDTDTPLDAIAALNPDVLVKGGDYTRESIVGADIVEARGGEIVIVPLVAGHSTTAIIARSETGK</sequence>
<name>HLDE_HYPNA</name>
<keyword id="KW-0067">ATP-binding</keyword>
<keyword id="KW-0119">Carbohydrate metabolism</keyword>
<keyword id="KW-0418">Kinase</keyword>
<keyword id="KW-0511">Multifunctional enzyme</keyword>
<keyword id="KW-0547">Nucleotide-binding</keyword>
<keyword id="KW-0548">Nucleotidyltransferase</keyword>
<keyword id="KW-1185">Reference proteome</keyword>
<keyword id="KW-0808">Transferase</keyword>
<dbReference type="EC" id="2.7.1.167" evidence="1"/>
<dbReference type="EC" id="2.7.7.70" evidence="1"/>
<dbReference type="EMBL" id="CP000158">
    <property type="protein sequence ID" value="ABI78468.1"/>
    <property type="molecule type" value="Genomic_DNA"/>
</dbReference>
<dbReference type="SMR" id="Q0C190"/>
<dbReference type="STRING" id="228405.HNE_1799"/>
<dbReference type="KEGG" id="hne:HNE_1799"/>
<dbReference type="eggNOG" id="COG0615">
    <property type="taxonomic scope" value="Bacteria"/>
</dbReference>
<dbReference type="eggNOG" id="COG2870">
    <property type="taxonomic scope" value="Bacteria"/>
</dbReference>
<dbReference type="HOGENOM" id="CLU_021150_2_1_5"/>
<dbReference type="UniPathway" id="UPA00356">
    <property type="reaction ID" value="UER00437"/>
</dbReference>
<dbReference type="UniPathway" id="UPA00356">
    <property type="reaction ID" value="UER00439"/>
</dbReference>
<dbReference type="Proteomes" id="UP000001959">
    <property type="component" value="Chromosome"/>
</dbReference>
<dbReference type="GO" id="GO:0005829">
    <property type="term" value="C:cytosol"/>
    <property type="evidence" value="ECO:0007669"/>
    <property type="project" value="TreeGrafter"/>
</dbReference>
<dbReference type="GO" id="GO:0005524">
    <property type="term" value="F:ATP binding"/>
    <property type="evidence" value="ECO:0007669"/>
    <property type="project" value="UniProtKB-UniRule"/>
</dbReference>
<dbReference type="GO" id="GO:0033785">
    <property type="term" value="F:heptose 7-phosphate kinase activity"/>
    <property type="evidence" value="ECO:0007669"/>
    <property type="project" value="UniProtKB-UniRule"/>
</dbReference>
<dbReference type="GO" id="GO:0033786">
    <property type="term" value="F:heptose-1-phosphate adenylyltransferase activity"/>
    <property type="evidence" value="ECO:0007669"/>
    <property type="project" value="UniProtKB-UniRule"/>
</dbReference>
<dbReference type="GO" id="GO:0016773">
    <property type="term" value="F:phosphotransferase activity, alcohol group as acceptor"/>
    <property type="evidence" value="ECO:0007669"/>
    <property type="project" value="InterPro"/>
</dbReference>
<dbReference type="GO" id="GO:0097171">
    <property type="term" value="P:ADP-L-glycero-beta-D-manno-heptose biosynthetic process"/>
    <property type="evidence" value="ECO:0007669"/>
    <property type="project" value="UniProtKB-UniPathway"/>
</dbReference>
<dbReference type="CDD" id="cd01172">
    <property type="entry name" value="RfaE_like"/>
    <property type="match status" value="1"/>
</dbReference>
<dbReference type="Gene3D" id="3.40.1190.20">
    <property type="match status" value="1"/>
</dbReference>
<dbReference type="Gene3D" id="3.40.50.620">
    <property type="entry name" value="HUPs"/>
    <property type="match status" value="1"/>
</dbReference>
<dbReference type="HAMAP" id="MF_01603">
    <property type="entry name" value="HldE"/>
    <property type="match status" value="1"/>
</dbReference>
<dbReference type="InterPro" id="IPR023030">
    <property type="entry name" value="Bifunc_HldE"/>
</dbReference>
<dbReference type="InterPro" id="IPR002173">
    <property type="entry name" value="Carboh/pur_kinase_PfkB_CS"/>
</dbReference>
<dbReference type="InterPro" id="IPR004821">
    <property type="entry name" value="Cyt_trans-like"/>
</dbReference>
<dbReference type="InterPro" id="IPR011611">
    <property type="entry name" value="PfkB_dom"/>
</dbReference>
<dbReference type="InterPro" id="IPR011913">
    <property type="entry name" value="RfaE_dom_I"/>
</dbReference>
<dbReference type="InterPro" id="IPR011914">
    <property type="entry name" value="RfaE_dom_II"/>
</dbReference>
<dbReference type="InterPro" id="IPR029056">
    <property type="entry name" value="Ribokinase-like"/>
</dbReference>
<dbReference type="InterPro" id="IPR014729">
    <property type="entry name" value="Rossmann-like_a/b/a_fold"/>
</dbReference>
<dbReference type="NCBIfam" id="TIGR00125">
    <property type="entry name" value="cyt_tran_rel"/>
    <property type="match status" value="1"/>
</dbReference>
<dbReference type="NCBIfam" id="TIGR02199">
    <property type="entry name" value="rfaE_dom_II"/>
    <property type="match status" value="1"/>
</dbReference>
<dbReference type="PANTHER" id="PTHR46969">
    <property type="entry name" value="BIFUNCTIONAL PROTEIN HLDE"/>
    <property type="match status" value="1"/>
</dbReference>
<dbReference type="PANTHER" id="PTHR46969:SF1">
    <property type="entry name" value="BIFUNCTIONAL PROTEIN HLDE"/>
    <property type="match status" value="1"/>
</dbReference>
<dbReference type="Pfam" id="PF01467">
    <property type="entry name" value="CTP_transf_like"/>
    <property type="match status" value="1"/>
</dbReference>
<dbReference type="Pfam" id="PF00294">
    <property type="entry name" value="PfkB"/>
    <property type="match status" value="1"/>
</dbReference>
<dbReference type="SUPFAM" id="SSF52374">
    <property type="entry name" value="Nucleotidylyl transferase"/>
    <property type="match status" value="1"/>
</dbReference>
<dbReference type="SUPFAM" id="SSF53613">
    <property type="entry name" value="Ribokinase-like"/>
    <property type="match status" value="1"/>
</dbReference>
<dbReference type="PROSITE" id="PS00583">
    <property type="entry name" value="PFKB_KINASES_1"/>
    <property type="match status" value="1"/>
</dbReference>
<dbReference type="PROSITE" id="PS00584">
    <property type="entry name" value="PFKB_KINASES_2"/>
    <property type="match status" value="1"/>
</dbReference>
<evidence type="ECO:0000255" key="1">
    <source>
        <dbReference type="HAMAP-Rule" id="MF_01603"/>
    </source>
</evidence>